<proteinExistence type="inferred from homology"/>
<feature type="chain" id="PRO_0000140472" description="(R)-citramalate synthase">
    <location>
        <begin position="1"/>
        <end position="538"/>
    </location>
</feature>
<feature type="domain" description="Pyruvate carboxyltransferase" evidence="2">
    <location>
        <begin position="3"/>
        <end position="268"/>
    </location>
</feature>
<reference key="1">
    <citation type="journal article" date="1999" name="Nature">
        <title>Evidence for lateral gene transfer between Archaea and Bacteria from genome sequence of Thermotoga maritima.</title>
        <authorList>
            <person name="Nelson K.E."/>
            <person name="Clayton R.A."/>
            <person name="Gill S.R."/>
            <person name="Gwinn M.L."/>
            <person name="Dodson R.J."/>
            <person name="Haft D.H."/>
            <person name="Hickey E.K."/>
            <person name="Peterson J.D."/>
            <person name="Nelson W.C."/>
            <person name="Ketchum K.A."/>
            <person name="McDonald L.A."/>
            <person name="Utterback T.R."/>
            <person name="Malek J.A."/>
            <person name="Linher K.D."/>
            <person name="Garrett M.M."/>
            <person name="Stewart A.M."/>
            <person name="Cotton M.D."/>
            <person name="Pratt M.S."/>
            <person name="Phillips C.A."/>
            <person name="Richardson D.L."/>
            <person name="Heidelberg J.F."/>
            <person name="Sutton G.G."/>
            <person name="Fleischmann R.D."/>
            <person name="Eisen J.A."/>
            <person name="White O."/>
            <person name="Salzberg S.L."/>
            <person name="Smith H.O."/>
            <person name="Venter J.C."/>
            <person name="Fraser C.M."/>
        </authorList>
    </citation>
    <scope>NUCLEOTIDE SEQUENCE [LARGE SCALE GENOMIC DNA]</scope>
    <source>
        <strain>ATCC 43589 / DSM 3109 / JCM 10099 / NBRC 100826 / MSB8</strain>
    </source>
</reference>
<dbReference type="EC" id="2.3.3.21" evidence="1"/>
<dbReference type="EMBL" id="AE000512">
    <property type="protein sequence ID" value="AAD35637.1"/>
    <property type="molecule type" value="Genomic_DNA"/>
</dbReference>
<dbReference type="PIR" id="F72362">
    <property type="entry name" value="F72362"/>
</dbReference>
<dbReference type="RefSeq" id="NP_228362.1">
    <property type="nucleotide sequence ID" value="NC_000853.1"/>
</dbReference>
<dbReference type="RefSeq" id="WP_004081335.1">
    <property type="nucleotide sequence ID" value="NZ_CP011107.1"/>
</dbReference>
<dbReference type="SMR" id="Q9WZ22"/>
<dbReference type="STRING" id="243274.TM_0552"/>
<dbReference type="PaxDb" id="243274-THEMA_01915"/>
<dbReference type="EnsemblBacteria" id="AAD35637">
    <property type="protein sequence ID" value="AAD35637"/>
    <property type="gene ID" value="TM_0552"/>
</dbReference>
<dbReference type="KEGG" id="tma:TM0552"/>
<dbReference type="KEGG" id="tmi:THEMA_01915"/>
<dbReference type="KEGG" id="tmm:Tmari_0549"/>
<dbReference type="KEGG" id="tmw:THMA_0565"/>
<dbReference type="eggNOG" id="COG0119">
    <property type="taxonomic scope" value="Bacteria"/>
</dbReference>
<dbReference type="InParanoid" id="Q9WZ22"/>
<dbReference type="OrthoDB" id="9804858at2"/>
<dbReference type="UniPathway" id="UPA00047">
    <property type="reaction ID" value="UER00066"/>
</dbReference>
<dbReference type="Proteomes" id="UP000008183">
    <property type="component" value="Chromosome"/>
</dbReference>
<dbReference type="GO" id="GO:0043714">
    <property type="term" value="F:(R)-citramalate synthase activity"/>
    <property type="evidence" value="ECO:0007669"/>
    <property type="project" value="RHEA"/>
</dbReference>
<dbReference type="GO" id="GO:0003852">
    <property type="term" value="F:2-isopropylmalate synthase activity"/>
    <property type="evidence" value="ECO:0007669"/>
    <property type="project" value="InterPro"/>
</dbReference>
<dbReference type="GO" id="GO:0009097">
    <property type="term" value="P:isoleucine biosynthetic process"/>
    <property type="evidence" value="ECO:0007669"/>
    <property type="project" value="UniProtKB-UniPathway"/>
</dbReference>
<dbReference type="GO" id="GO:0009098">
    <property type="term" value="P:L-leucine biosynthetic process"/>
    <property type="evidence" value="ECO:0007669"/>
    <property type="project" value="InterPro"/>
</dbReference>
<dbReference type="CDD" id="cd07941">
    <property type="entry name" value="DRE_TIM_LeuA3"/>
    <property type="match status" value="1"/>
</dbReference>
<dbReference type="Gene3D" id="1.10.238.260">
    <property type="match status" value="1"/>
</dbReference>
<dbReference type="Gene3D" id="3.30.160.270">
    <property type="match status" value="1"/>
</dbReference>
<dbReference type="Gene3D" id="3.20.20.70">
    <property type="entry name" value="Aldolase class I"/>
    <property type="match status" value="1"/>
</dbReference>
<dbReference type="InterPro" id="IPR013709">
    <property type="entry name" value="2-isopropylmalate_synth_dimer"/>
</dbReference>
<dbReference type="InterPro" id="IPR002034">
    <property type="entry name" value="AIPM/Hcit_synth_CS"/>
</dbReference>
<dbReference type="InterPro" id="IPR013785">
    <property type="entry name" value="Aldolase_TIM"/>
</dbReference>
<dbReference type="InterPro" id="IPR005675">
    <property type="entry name" value="Citramal_synthase"/>
</dbReference>
<dbReference type="InterPro" id="IPR054691">
    <property type="entry name" value="LeuA/HCS_post-cat"/>
</dbReference>
<dbReference type="InterPro" id="IPR036230">
    <property type="entry name" value="LeuA_allosteric_dom_sf"/>
</dbReference>
<dbReference type="InterPro" id="IPR000891">
    <property type="entry name" value="PYR_CT"/>
</dbReference>
<dbReference type="NCBIfam" id="TIGR00977">
    <property type="entry name" value="citramal_synth"/>
    <property type="match status" value="1"/>
</dbReference>
<dbReference type="PANTHER" id="PTHR43538:SF1">
    <property type="entry name" value="(R)-CITRAMALATE SYNTHASE"/>
    <property type="match status" value="1"/>
</dbReference>
<dbReference type="PANTHER" id="PTHR43538">
    <property type="entry name" value="ALPHA-IPM SYNTHASE/HOMOCITRATE SYNTHASE"/>
    <property type="match status" value="1"/>
</dbReference>
<dbReference type="Pfam" id="PF22617">
    <property type="entry name" value="HCS_D2"/>
    <property type="match status" value="1"/>
</dbReference>
<dbReference type="Pfam" id="PF00682">
    <property type="entry name" value="HMGL-like"/>
    <property type="match status" value="1"/>
</dbReference>
<dbReference type="Pfam" id="PF08502">
    <property type="entry name" value="LeuA_dimer"/>
    <property type="match status" value="1"/>
</dbReference>
<dbReference type="SMART" id="SM00917">
    <property type="entry name" value="LeuA_dimer"/>
    <property type="match status" value="1"/>
</dbReference>
<dbReference type="SUPFAM" id="SSF110921">
    <property type="entry name" value="2-isopropylmalate synthase LeuA, allosteric (dimerisation) domain"/>
    <property type="match status" value="1"/>
</dbReference>
<dbReference type="SUPFAM" id="SSF51569">
    <property type="entry name" value="Aldolase"/>
    <property type="match status" value="1"/>
</dbReference>
<dbReference type="PROSITE" id="PS00815">
    <property type="entry name" value="AIPM_HOMOCIT_SYNTH_1"/>
    <property type="match status" value="1"/>
</dbReference>
<dbReference type="PROSITE" id="PS50991">
    <property type="entry name" value="PYR_CT"/>
    <property type="match status" value="1"/>
</dbReference>
<keyword id="KW-0028">Amino-acid biosynthesis</keyword>
<keyword id="KW-0100">Branched-chain amino acid biosynthesis</keyword>
<keyword id="KW-0412">Isoleucine biosynthesis</keyword>
<keyword id="KW-1185">Reference proteome</keyword>
<keyword id="KW-0808">Transferase</keyword>
<name>CIMA_THEMA</name>
<gene>
    <name evidence="3" type="primary">cimA</name>
    <name type="ordered locus">TM_0552</name>
</gene>
<organism>
    <name type="scientific">Thermotoga maritima (strain ATCC 43589 / DSM 3109 / JCM 10099 / NBRC 100826 / MSB8)</name>
    <dbReference type="NCBI Taxonomy" id="243274"/>
    <lineage>
        <taxon>Bacteria</taxon>
        <taxon>Thermotogati</taxon>
        <taxon>Thermotogota</taxon>
        <taxon>Thermotogae</taxon>
        <taxon>Thermotogales</taxon>
        <taxon>Thermotogaceae</taxon>
        <taxon>Thermotoga</taxon>
    </lineage>
</organism>
<protein>
    <recommendedName>
        <fullName evidence="3">(R)-citramalate synthase</fullName>
        <ecNumber evidence="1">2.3.3.21</ecNumber>
    </recommendedName>
</protein>
<accession>Q9WZ22</accession>
<sequence length="538" mass="60290">MSIKVYDTTLRDGAQAFGVSFSLEDKIRIAEALDDLGVHYLEGGWPGSNPKDIAFFEAVKGMNFKNLKVAAFSSTRRPDVKIEEDANIQTLIKAETPVYTIFGKSWDLHVEKALRTTLEENLKMIYDTVSYLKRFADEVIYDAEHFFDGYKANREYALKTLKVAEEAGADCLVLADTNGGTLPHEIEEIIEDVKKHVKAPLGIHAHNDSDVAVANTLAAVRKGAVHVQGTINGLGERCGNANLCSVIPNLVLKMGLEVIPKENLKKLFDVAHLVAELSGRPHIENMPYVGDYAFAHKGGVHVSAIKRDPRTYEHIDPELVGNRRIISISELSGKSNVLEKIKEMGFEIDESSPKVREILKKIKELEAQGYHFEGAEASFELLVRDMLGKRKKYFEFLGFTVMTIKNRDEESFSEATVKVRVPDEVAKRLGHDEPFEHTAAEGEGPVEALDRAVRKALEKFYPSLKDTKLTDYKVRILNEQAGTKATTRVLIESSDGKRRWGTVGVSPNIIEASWTALLESLEYKLHKDEEEMRNDEEN</sequence>
<evidence type="ECO:0000250" key="1">
    <source>
        <dbReference type="UniProtKB" id="Q74C76"/>
    </source>
</evidence>
<evidence type="ECO:0000255" key="2">
    <source>
        <dbReference type="PROSITE-ProRule" id="PRU01151"/>
    </source>
</evidence>
<evidence type="ECO:0000305" key="3"/>
<comment type="function">
    <text evidence="1">Catalyzes the condensation of pyruvate and acetyl-coenzyme A to form (R)-citramalate.</text>
</comment>
<comment type="catalytic activity">
    <reaction evidence="1">
        <text>pyruvate + acetyl-CoA + H2O = (3R)-citramalate + CoA + H(+)</text>
        <dbReference type="Rhea" id="RHEA:19045"/>
        <dbReference type="ChEBI" id="CHEBI:15361"/>
        <dbReference type="ChEBI" id="CHEBI:15377"/>
        <dbReference type="ChEBI" id="CHEBI:15378"/>
        <dbReference type="ChEBI" id="CHEBI:30934"/>
        <dbReference type="ChEBI" id="CHEBI:57287"/>
        <dbReference type="ChEBI" id="CHEBI:57288"/>
        <dbReference type="EC" id="2.3.3.21"/>
    </reaction>
</comment>
<comment type="pathway">
    <text evidence="1">Amino-acid biosynthesis; L-isoleucine biosynthesis; 2-oxobutanoate from pyruvate: step 1/3.</text>
</comment>
<comment type="similarity">
    <text evidence="3">Belongs to the alpha-IPM synthase/homocitrate synthase family.</text>
</comment>